<dbReference type="EC" id="2.1.3.15" evidence="1"/>
<dbReference type="EMBL" id="CP000921">
    <property type="protein sequence ID" value="ACO22652.1"/>
    <property type="molecule type" value="Genomic_DNA"/>
</dbReference>
<dbReference type="RefSeq" id="WP_001017399.1">
    <property type="nucleotide sequence ID" value="NC_012469.1"/>
</dbReference>
<dbReference type="SMR" id="C1CPT7"/>
<dbReference type="KEGG" id="snt:SPT_0464"/>
<dbReference type="HOGENOM" id="CLU_015486_0_2_9"/>
<dbReference type="UniPathway" id="UPA00655">
    <property type="reaction ID" value="UER00711"/>
</dbReference>
<dbReference type="GO" id="GO:0009317">
    <property type="term" value="C:acetyl-CoA carboxylase complex"/>
    <property type="evidence" value="ECO:0007669"/>
    <property type="project" value="InterPro"/>
</dbReference>
<dbReference type="GO" id="GO:0003989">
    <property type="term" value="F:acetyl-CoA carboxylase activity"/>
    <property type="evidence" value="ECO:0007669"/>
    <property type="project" value="InterPro"/>
</dbReference>
<dbReference type="GO" id="GO:0005524">
    <property type="term" value="F:ATP binding"/>
    <property type="evidence" value="ECO:0007669"/>
    <property type="project" value="UniProtKB-KW"/>
</dbReference>
<dbReference type="GO" id="GO:0016743">
    <property type="term" value="F:carboxyl- or carbamoyltransferase activity"/>
    <property type="evidence" value="ECO:0007669"/>
    <property type="project" value="UniProtKB-UniRule"/>
</dbReference>
<dbReference type="GO" id="GO:0006633">
    <property type="term" value="P:fatty acid biosynthetic process"/>
    <property type="evidence" value="ECO:0007669"/>
    <property type="project" value="UniProtKB-KW"/>
</dbReference>
<dbReference type="GO" id="GO:2001295">
    <property type="term" value="P:malonyl-CoA biosynthetic process"/>
    <property type="evidence" value="ECO:0007669"/>
    <property type="project" value="UniProtKB-UniRule"/>
</dbReference>
<dbReference type="Gene3D" id="3.90.226.10">
    <property type="entry name" value="2-enoyl-CoA Hydratase, Chain A, domain 1"/>
    <property type="match status" value="1"/>
</dbReference>
<dbReference type="HAMAP" id="MF_00823">
    <property type="entry name" value="AcetylCoA_CT_alpha"/>
    <property type="match status" value="1"/>
</dbReference>
<dbReference type="InterPro" id="IPR001095">
    <property type="entry name" value="Acetyl_CoA_COase_a_su"/>
</dbReference>
<dbReference type="InterPro" id="IPR029045">
    <property type="entry name" value="ClpP/crotonase-like_dom_sf"/>
</dbReference>
<dbReference type="InterPro" id="IPR011763">
    <property type="entry name" value="COA_CT_C"/>
</dbReference>
<dbReference type="NCBIfam" id="TIGR00513">
    <property type="entry name" value="accA"/>
    <property type="match status" value="1"/>
</dbReference>
<dbReference type="NCBIfam" id="NF041504">
    <property type="entry name" value="AccA_sub"/>
    <property type="match status" value="1"/>
</dbReference>
<dbReference type="NCBIfam" id="NF004344">
    <property type="entry name" value="PRK05724.1"/>
    <property type="match status" value="1"/>
</dbReference>
<dbReference type="NCBIfam" id="NF008971">
    <property type="entry name" value="PRK12319.1"/>
    <property type="match status" value="1"/>
</dbReference>
<dbReference type="PANTHER" id="PTHR42853">
    <property type="entry name" value="ACETYL-COENZYME A CARBOXYLASE CARBOXYL TRANSFERASE SUBUNIT ALPHA"/>
    <property type="match status" value="1"/>
</dbReference>
<dbReference type="PANTHER" id="PTHR42853:SF3">
    <property type="entry name" value="ACETYL-COENZYME A CARBOXYLASE CARBOXYL TRANSFERASE SUBUNIT ALPHA, CHLOROPLASTIC"/>
    <property type="match status" value="1"/>
</dbReference>
<dbReference type="Pfam" id="PF03255">
    <property type="entry name" value="ACCA"/>
    <property type="match status" value="1"/>
</dbReference>
<dbReference type="PRINTS" id="PR01069">
    <property type="entry name" value="ACCCTRFRASEA"/>
</dbReference>
<dbReference type="SUPFAM" id="SSF52096">
    <property type="entry name" value="ClpP/crotonase"/>
    <property type="match status" value="1"/>
</dbReference>
<dbReference type="PROSITE" id="PS50989">
    <property type="entry name" value="COA_CT_CTER"/>
    <property type="match status" value="1"/>
</dbReference>
<name>ACCA_STRZT</name>
<proteinExistence type="inferred from homology"/>
<evidence type="ECO:0000255" key="1">
    <source>
        <dbReference type="HAMAP-Rule" id="MF_00823"/>
    </source>
</evidence>
<evidence type="ECO:0000255" key="2">
    <source>
        <dbReference type="PROSITE-ProRule" id="PRU01137"/>
    </source>
</evidence>
<feature type="chain" id="PRO_1000148756" description="Acetyl-coenzyme A carboxylase carboxyl transferase subunit alpha">
    <location>
        <begin position="1"/>
        <end position="255"/>
    </location>
</feature>
<feature type="domain" description="CoA carboxyltransferase C-terminal" evidence="2">
    <location>
        <begin position="1"/>
        <end position="235"/>
    </location>
</feature>
<comment type="function">
    <text evidence="1">Component of the acetyl coenzyme A carboxylase (ACC) complex. First, biotin carboxylase catalyzes the carboxylation of biotin on its carrier protein (BCCP) and then the CO(2) group is transferred by the carboxyltransferase to acetyl-CoA to form malonyl-CoA.</text>
</comment>
<comment type="catalytic activity">
    <reaction evidence="1">
        <text>N(6)-carboxybiotinyl-L-lysyl-[protein] + acetyl-CoA = N(6)-biotinyl-L-lysyl-[protein] + malonyl-CoA</text>
        <dbReference type="Rhea" id="RHEA:54728"/>
        <dbReference type="Rhea" id="RHEA-COMP:10505"/>
        <dbReference type="Rhea" id="RHEA-COMP:10506"/>
        <dbReference type="ChEBI" id="CHEBI:57288"/>
        <dbReference type="ChEBI" id="CHEBI:57384"/>
        <dbReference type="ChEBI" id="CHEBI:83144"/>
        <dbReference type="ChEBI" id="CHEBI:83145"/>
        <dbReference type="EC" id="2.1.3.15"/>
    </reaction>
</comment>
<comment type="pathway">
    <text evidence="1">Lipid metabolism; malonyl-CoA biosynthesis; malonyl-CoA from acetyl-CoA: step 1/1.</text>
</comment>
<comment type="subunit">
    <text evidence="1">Acetyl-CoA carboxylase is a heterohexamer composed of biotin carboxyl carrier protein (AccB), biotin carboxylase (AccC) and two subunits each of ACCase subunit alpha (AccA) and ACCase subunit beta (AccD).</text>
</comment>
<comment type="subcellular location">
    <subcellularLocation>
        <location evidence="1">Cytoplasm</location>
    </subcellularLocation>
</comment>
<comment type="similarity">
    <text evidence="1">Belongs to the AccA family.</text>
</comment>
<accession>C1CPT7</accession>
<keyword id="KW-0067">ATP-binding</keyword>
<keyword id="KW-0963">Cytoplasm</keyword>
<keyword id="KW-0275">Fatty acid biosynthesis</keyword>
<keyword id="KW-0276">Fatty acid metabolism</keyword>
<keyword id="KW-0444">Lipid biosynthesis</keyword>
<keyword id="KW-0443">Lipid metabolism</keyword>
<keyword id="KW-0547">Nucleotide-binding</keyword>
<keyword id="KW-0808">Transferase</keyword>
<reference key="1">
    <citation type="journal article" date="2010" name="Genome Biol.">
        <title>Structure and dynamics of the pan-genome of Streptococcus pneumoniae and closely related species.</title>
        <authorList>
            <person name="Donati C."/>
            <person name="Hiller N.L."/>
            <person name="Tettelin H."/>
            <person name="Muzzi A."/>
            <person name="Croucher N.J."/>
            <person name="Angiuoli S.V."/>
            <person name="Oggioni M."/>
            <person name="Dunning Hotopp J.C."/>
            <person name="Hu F.Z."/>
            <person name="Riley D.R."/>
            <person name="Covacci A."/>
            <person name="Mitchell T.J."/>
            <person name="Bentley S.D."/>
            <person name="Kilian M."/>
            <person name="Ehrlich G.D."/>
            <person name="Rappuoli R."/>
            <person name="Moxon E.R."/>
            <person name="Masignani V."/>
        </authorList>
    </citation>
    <scope>NUCLEOTIDE SEQUENCE [LARGE SCALE GENOMIC DNA]</scope>
    <source>
        <strain>Taiwan19F-14</strain>
    </source>
</reference>
<sequence length="255" mass="28234">MNIAKIVREAREQSRLTTLDFATGIFDEFIQLHGDRSFRDDGAVVGGIGWLGDQAVTVVGIQKGKSLQDNLKRNFGQPHPEGYRKALRLMKQAEKFGRPVVTFINTAGAYPGVGAEERGQGEAIARNLMEMSDLKVPIIAIIIGEGGSGGALALAVADRVWMLENSIYAILSPEGFASILWKDGTRAMEAAELMKITSHELLEMDVVDKVISEVGLSSKELIKSVKKELQTELARLSQKPLEELLEERYQRFRKY</sequence>
<protein>
    <recommendedName>
        <fullName evidence="1">Acetyl-coenzyme A carboxylase carboxyl transferase subunit alpha</fullName>
        <shortName evidence="1">ACCase subunit alpha</shortName>
        <shortName evidence="1">Acetyl-CoA carboxylase carboxyltransferase subunit alpha</shortName>
        <ecNumber evidence="1">2.1.3.15</ecNumber>
    </recommendedName>
</protein>
<gene>
    <name evidence="1" type="primary">accA</name>
    <name type="ordered locus">SPT_0464</name>
</gene>
<organism>
    <name type="scientific">Streptococcus pneumoniae (strain Taiwan19F-14)</name>
    <dbReference type="NCBI Taxonomy" id="487213"/>
    <lineage>
        <taxon>Bacteria</taxon>
        <taxon>Bacillati</taxon>
        <taxon>Bacillota</taxon>
        <taxon>Bacilli</taxon>
        <taxon>Lactobacillales</taxon>
        <taxon>Streptococcaceae</taxon>
        <taxon>Streptococcus</taxon>
    </lineage>
</organism>